<proteinExistence type="inferred from homology"/>
<dbReference type="EMBL" id="CP000896">
    <property type="protein sequence ID" value="ABX80821.1"/>
    <property type="molecule type" value="Genomic_DNA"/>
</dbReference>
<dbReference type="RefSeq" id="WP_012242152.1">
    <property type="nucleotide sequence ID" value="NC_010163.1"/>
</dbReference>
<dbReference type="SMR" id="A9NEP1"/>
<dbReference type="STRING" id="441768.ACL_0195"/>
<dbReference type="GeneID" id="41338386"/>
<dbReference type="KEGG" id="acl:ACL_0195"/>
<dbReference type="eggNOG" id="COG0238">
    <property type="taxonomic scope" value="Bacteria"/>
</dbReference>
<dbReference type="HOGENOM" id="CLU_148710_2_2_14"/>
<dbReference type="OrthoDB" id="9812008at2"/>
<dbReference type="Proteomes" id="UP000008558">
    <property type="component" value="Chromosome"/>
</dbReference>
<dbReference type="GO" id="GO:0022627">
    <property type="term" value="C:cytosolic small ribosomal subunit"/>
    <property type="evidence" value="ECO:0007669"/>
    <property type="project" value="TreeGrafter"/>
</dbReference>
<dbReference type="GO" id="GO:0070181">
    <property type="term" value="F:small ribosomal subunit rRNA binding"/>
    <property type="evidence" value="ECO:0007669"/>
    <property type="project" value="TreeGrafter"/>
</dbReference>
<dbReference type="GO" id="GO:0003735">
    <property type="term" value="F:structural constituent of ribosome"/>
    <property type="evidence" value="ECO:0007669"/>
    <property type="project" value="InterPro"/>
</dbReference>
<dbReference type="GO" id="GO:0006412">
    <property type="term" value="P:translation"/>
    <property type="evidence" value="ECO:0007669"/>
    <property type="project" value="UniProtKB-UniRule"/>
</dbReference>
<dbReference type="FunFam" id="4.10.640.10:FF:000003">
    <property type="entry name" value="30S ribosomal protein S18"/>
    <property type="match status" value="1"/>
</dbReference>
<dbReference type="Gene3D" id="4.10.640.10">
    <property type="entry name" value="Ribosomal protein S18"/>
    <property type="match status" value="1"/>
</dbReference>
<dbReference type="HAMAP" id="MF_00270">
    <property type="entry name" value="Ribosomal_bS18"/>
    <property type="match status" value="1"/>
</dbReference>
<dbReference type="InterPro" id="IPR001648">
    <property type="entry name" value="Ribosomal_bS18"/>
</dbReference>
<dbReference type="InterPro" id="IPR018275">
    <property type="entry name" value="Ribosomal_bS18_CS"/>
</dbReference>
<dbReference type="InterPro" id="IPR036870">
    <property type="entry name" value="Ribosomal_bS18_sf"/>
</dbReference>
<dbReference type="NCBIfam" id="TIGR00165">
    <property type="entry name" value="S18"/>
    <property type="match status" value="1"/>
</dbReference>
<dbReference type="PANTHER" id="PTHR13479">
    <property type="entry name" value="30S RIBOSOMAL PROTEIN S18"/>
    <property type="match status" value="1"/>
</dbReference>
<dbReference type="PANTHER" id="PTHR13479:SF40">
    <property type="entry name" value="SMALL RIBOSOMAL SUBUNIT PROTEIN BS18M"/>
    <property type="match status" value="1"/>
</dbReference>
<dbReference type="Pfam" id="PF01084">
    <property type="entry name" value="Ribosomal_S18"/>
    <property type="match status" value="1"/>
</dbReference>
<dbReference type="PRINTS" id="PR00974">
    <property type="entry name" value="RIBOSOMALS18"/>
</dbReference>
<dbReference type="SUPFAM" id="SSF46911">
    <property type="entry name" value="Ribosomal protein S18"/>
    <property type="match status" value="1"/>
</dbReference>
<dbReference type="PROSITE" id="PS00057">
    <property type="entry name" value="RIBOSOMAL_S18"/>
    <property type="match status" value="1"/>
</dbReference>
<gene>
    <name evidence="1" type="primary">rpsR</name>
    <name type="ordered locus">ACL_0195</name>
</gene>
<evidence type="ECO:0000255" key="1">
    <source>
        <dbReference type="HAMAP-Rule" id="MF_00270"/>
    </source>
</evidence>
<evidence type="ECO:0000305" key="2"/>
<feature type="chain" id="PRO_0000345431" description="Small ribosomal subunit protein bS18">
    <location>
        <begin position="1"/>
        <end position="80"/>
    </location>
</feature>
<reference key="1">
    <citation type="journal article" date="2011" name="J. Bacteriol.">
        <title>Complete genome and proteome of Acholeplasma laidlawii.</title>
        <authorList>
            <person name="Lazarev V.N."/>
            <person name="Levitskii S.A."/>
            <person name="Basovskii Y.I."/>
            <person name="Chukin M.M."/>
            <person name="Akopian T.A."/>
            <person name="Vereshchagin V.V."/>
            <person name="Kostrjukova E.S."/>
            <person name="Kovaleva G.Y."/>
            <person name="Kazanov M.D."/>
            <person name="Malko D.B."/>
            <person name="Vitreschak A.G."/>
            <person name="Sernova N.V."/>
            <person name="Gelfand M.S."/>
            <person name="Demina I.A."/>
            <person name="Serebryakova M.V."/>
            <person name="Galyamina M.A."/>
            <person name="Vtyurin N.N."/>
            <person name="Rogov S.I."/>
            <person name="Alexeev D.G."/>
            <person name="Ladygina V.G."/>
            <person name="Govorun V.M."/>
        </authorList>
    </citation>
    <scope>NUCLEOTIDE SEQUENCE [LARGE SCALE GENOMIC DNA]</scope>
    <source>
        <strain>PG-8A</strain>
    </source>
</reference>
<name>RS18_ACHLI</name>
<keyword id="KW-1185">Reference proteome</keyword>
<keyword id="KW-0687">Ribonucleoprotein</keyword>
<keyword id="KW-0689">Ribosomal protein</keyword>
<keyword id="KW-0694">RNA-binding</keyword>
<keyword id="KW-0699">rRNA-binding</keyword>
<protein>
    <recommendedName>
        <fullName evidence="1">Small ribosomal subunit protein bS18</fullName>
    </recommendedName>
    <alternativeName>
        <fullName evidence="2">30S ribosomal protein S18</fullName>
    </alternativeName>
</protein>
<organism>
    <name type="scientific">Acholeplasma laidlawii (strain PG-8A)</name>
    <dbReference type="NCBI Taxonomy" id="441768"/>
    <lineage>
        <taxon>Bacteria</taxon>
        <taxon>Bacillati</taxon>
        <taxon>Mycoplasmatota</taxon>
        <taxon>Mollicutes</taxon>
        <taxon>Acholeplasmatales</taxon>
        <taxon>Acholeplasmataceae</taxon>
        <taxon>Acholeplasma</taxon>
    </lineage>
</organism>
<comment type="function">
    <text evidence="1">Binds as a heterodimer with protein bS6 to the central domain of the 16S rRNA, where it helps stabilize the platform of the 30S subunit.</text>
</comment>
<comment type="subunit">
    <text evidence="1">Part of the 30S ribosomal subunit. Forms a tight heterodimer with protein bS6.</text>
</comment>
<comment type="similarity">
    <text evidence="1">Belongs to the bacterial ribosomal protein bS18 family.</text>
</comment>
<sequence>MQDRKNRAGGFRKRKKVCFFTQNKFTHIDFKDTELLKRFITERGKILPRRVTGTSAKWQRPLAVAIKRARHMALLPFVKE</sequence>
<accession>A9NEP1</accession>